<sequence>MTSATPQPGQLIVITGPSGVGKGTLLRQLRQRHPELALSVSATTRPPRPTEVAGVDYYFVSVEEFKAMIAAGQLLEWAEFAGHYYGTPRQPLVQLIAQGKTVILEIELQGARQVRQSYPQARHIFILPPSLAELEHRLRSRGQDSEEAIARRLAQAETEIAAAPEFDVQIVNDDLEKSLIALETAIFSPAP</sequence>
<reference key="1">
    <citation type="journal article" date="2002" name="DNA Res.">
        <title>Complete genome structure of the thermophilic cyanobacterium Thermosynechococcus elongatus BP-1.</title>
        <authorList>
            <person name="Nakamura Y."/>
            <person name="Kaneko T."/>
            <person name="Sato S."/>
            <person name="Ikeuchi M."/>
            <person name="Katoh H."/>
            <person name="Sasamoto S."/>
            <person name="Watanabe A."/>
            <person name="Iriguchi M."/>
            <person name="Kawashima K."/>
            <person name="Kimura T."/>
            <person name="Kishida Y."/>
            <person name="Kiyokawa C."/>
            <person name="Kohara M."/>
            <person name="Matsumoto M."/>
            <person name="Matsuno A."/>
            <person name="Nakazaki N."/>
            <person name="Shimpo S."/>
            <person name="Sugimoto M."/>
            <person name="Takeuchi C."/>
            <person name="Yamada M."/>
            <person name="Tabata S."/>
        </authorList>
    </citation>
    <scope>NUCLEOTIDE SEQUENCE [LARGE SCALE GENOMIC DNA]</scope>
    <source>
        <strain>NIES-2133 / IAM M-273 / BP-1</strain>
    </source>
</reference>
<dbReference type="EC" id="2.7.4.8" evidence="1"/>
<dbReference type="EMBL" id="BA000039">
    <property type="protein sequence ID" value="BAC07607.1"/>
    <property type="molecule type" value="Genomic_DNA"/>
</dbReference>
<dbReference type="RefSeq" id="NP_680845.1">
    <property type="nucleotide sequence ID" value="NC_004113.1"/>
</dbReference>
<dbReference type="RefSeq" id="WP_011055909.1">
    <property type="nucleotide sequence ID" value="NC_004113.1"/>
</dbReference>
<dbReference type="SMR" id="Q8DMQ7"/>
<dbReference type="STRING" id="197221.gene:10746632"/>
<dbReference type="EnsemblBacteria" id="BAC07607">
    <property type="protein sequence ID" value="BAC07607"/>
    <property type="gene ID" value="BAC07607"/>
</dbReference>
<dbReference type="KEGG" id="tel:tll0054"/>
<dbReference type="PATRIC" id="fig|197221.4.peg.55"/>
<dbReference type="eggNOG" id="COG0194">
    <property type="taxonomic scope" value="Bacteria"/>
</dbReference>
<dbReference type="Proteomes" id="UP000000440">
    <property type="component" value="Chromosome"/>
</dbReference>
<dbReference type="GO" id="GO:0005829">
    <property type="term" value="C:cytosol"/>
    <property type="evidence" value="ECO:0007669"/>
    <property type="project" value="TreeGrafter"/>
</dbReference>
<dbReference type="GO" id="GO:0005524">
    <property type="term" value="F:ATP binding"/>
    <property type="evidence" value="ECO:0007669"/>
    <property type="project" value="UniProtKB-UniRule"/>
</dbReference>
<dbReference type="GO" id="GO:0004385">
    <property type="term" value="F:guanylate kinase activity"/>
    <property type="evidence" value="ECO:0007669"/>
    <property type="project" value="UniProtKB-UniRule"/>
</dbReference>
<dbReference type="CDD" id="cd00071">
    <property type="entry name" value="GMPK"/>
    <property type="match status" value="1"/>
</dbReference>
<dbReference type="FunFam" id="3.30.63.10:FF:000002">
    <property type="entry name" value="Guanylate kinase 1"/>
    <property type="match status" value="1"/>
</dbReference>
<dbReference type="Gene3D" id="3.30.63.10">
    <property type="entry name" value="Guanylate Kinase phosphate binding domain"/>
    <property type="match status" value="1"/>
</dbReference>
<dbReference type="Gene3D" id="3.40.50.300">
    <property type="entry name" value="P-loop containing nucleotide triphosphate hydrolases"/>
    <property type="match status" value="2"/>
</dbReference>
<dbReference type="HAMAP" id="MF_00328">
    <property type="entry name" value="Guanylate_kinase"/>
    <property type="match status" value="1"/>
</dbReference>
<dbReference type="InterPro" id="IPR008145">
    <property type="entry name" value="GK/Ca_channel_bsu"/>
</dbReference>
<dbReference type="InterPro" id="IPR008144">
    <property type="entry name" value="Guanylate_kin-like_dom"/>
</dbReference>
<dbReference type="InterPro" id="IPR017665">
    <property type="entry name" value="Guanylate_kinase"/>
</dbReference>
<dbReference type="InterPro" id="IPR020590">
    <property type="entry name" value="Guanylate_kinase_CS"/>
</dbReference>
<dbReference type="InterPro" id="IPR027417">
    <property type="entry name" value="P-loop_NTPase"/>
</dbReference>
<dbReference type="NCBIfam" id="TIGR03263">
    <property type="entry name" value="guanyl_kin"/>
    <property type="match status" value="1"/>
</dbReference>
<dbReference type="PANTHER" id="PTHR23117:SF13">
    <property type="entry name" value="GUANYLATE KINASE"/>
    <property type="match status" value="1"/>
</dbReference>
<dbReference type="PANTHER" id="PTHR23117">
    <property type="entry name" value="GUANYLATE KINASE-RELATED"/>
    <property type="match status" value="1"/>
</dbReference>
<dbReference type="Pfam" id="PF00625">
    <property type="entry name" value="Guanylate_kin"/>
    <property type="match status" value="1"/>
</dbReference>
<dbReference type="SMART" id="SM00072">
    <property type="entry name" value="GuKc"/>
    <property type="match status" value="1"/>
</dbReference>
<dbReference type="SUPFAM" id="SSF52540">
    <property type="entry name" value="P-loop containing nucleoside triphosphate hydrolases"/>
    <property type="match status" value="1"/>
</dbReference>
<dbReference type="PROSITE" id="PS00856">
    <property type="entry name" value="GUANYLATE_KINASE_1"/>
    <property type="match status" value="1"/>
</dbReference>
<dbReference type="PROSITE" id="PS50052">
    <property type="entry name" value="GUANYLATE_KINASE_2"/>
    <property type="match status" value="1"/>
</dbReference>
<name>KGUA_THEVB</name>
<evidence type="ECO:0000255" key="1">
    <source>
        <dbReference type="HAMAP-Rule" id="MF_00328"/>
    </source>
</evidence>
<proteinExistence type="inferred from homology"/>
<protein>
    <recommendedName>
        <fullName evidence="1">Guanylate kinase</fullName>
        <ecNumber evidence="1">2.7.4.8</ecNumber>
    </recommendedName>
    <alternativeName>
        <fullName evidence="1">GMP kinase</fullName>
    </alternativeName>
</protein>
<feature type="chain" id="PRO_0000170625" description="Guanylate kinase">
    <location>
        <begin position="1"/>
        <end position="191"/>
    </location>
</feature>
<feature type="domain" description="Guanylate kinase-like" evidence="1">
    <location>
        <begin position="9"/>
        <end position="187"/>
    </location>
</feature>
<feature type="binding site" evidence="1">
    <location>
        <begin position="16"/>
        <end position="23"/>
    </location>
    <ligand>
        <name>ATP</name>
        <dbReference type="ChEBI" id="CHEBI:30616"/>
    </ligand>
</feature>
<organism>
    <name type="scientific">Thermosynechococcus vestitus (strain NIES-2133 / IAM M-273 / BP-1)</name>
    <dbReference type="NCBI Taxonomy" id="197221"/>
    <lineage>
        <taxon>Bacteria</taxon>
        <taxon>Bacillati</taxon>
        <taxon>Cyanobacteriota</taxon>
        <taxon>Cyanophyceae</taxon>
        <taxon>Acaryochloridales</taxon>
        <taxon>Thermosynechococcaceae</taxon>
        <taxon>Thermosynechococcus</taxon>
    </lineage>
</organism>
<gene>
    <name evidence="1" type="primary">gmk</name>
    <name type="ordered locus">tll0054</name>
</gene>
<keyword id="KW-0067">ATP-binding</keyword>
<keyword id="KW-0963">Cytoplasm</keyword>
<keyword id="KW-0418">Kinase</keyword>
<keyword id="KW-0547">Nucleotide-binding</keyword>
<keyword id="KW-1185">Reference proteome</keyword>
<keyword id="KW-0808">Transferase</keyword>
<comment type="function">
    <text evidence="1">Essential for recycling GMP and indirectly, cGMP.</text>
</comment>
<comment type="catalytic activity">
    <reaction evidence="1">
        <text>GMP + ATP = GDP + ADP</text>
        <dbReference type="Rhea" id="RHEA:20780"/>
        <dbReference type="ChEBI" id="CHEBI:30616"/>
        <dbReference type="ChEBI" id="CHEBI:58115"/>
        <dbReference type="ChEBI" id="CHEBI:58189"/>
        <dbReference type="ChEBI" id="CHEBI:456216"/>
        <dbReference type="EC" id="2.7.4.8"/>
    </reaction>
</comment>
<comment type="subcellular location">
    <subcellularLocation>
        <location evidence="1">Cytoplasm</location>
    </subcellularLocation>
</comment>
<comment type="similarity">
    <text evidence="1">Belongs to the guanylate kinase family.</text>
</comment>
<accession>Q8DMQ7</accession>